<keyword id="KW-0106">Calcium</keyword>
<keyword id="KW-1015">Disulfide bond</keyword>
<keyword id="KW-1199">Hemostasis impairing toxin</keyword>
<keyword id="KW-0378">Hydrolase</keyword>
<keyword id="KW-0442">Lipid degradation</keyword>
<keyword id="KW-0443">Lipid metabolism</keyword>
<keyword id="KW-0479">Metal-binding</keyword>
<keyword id="KW-1201">Platelet aggregation inhibiting toxin</keyword>
<keyword id="KW-0964">Secreted</keyword>
<keyword id="KW-0732">Signal</keyword>
<keyword id="KW-0800">Toxin</keyword>
<proteinExistence type="evidence at transcript level"/>
<dbReference type="EC" id="3.1.1.4"/>
<dbReference type="EMBL" id="X77646">
    <property type="protein sequence ID" value="CAB88411.1"/>
    <property type="molecule type" value="mRNA"/>
</dbReference>
<dbReference type="SMR" id="Q9I968"/>
<dbReference type="GO" id="GO:0005576">
    <property type="term" value="C:extracellular region"/>
    <property type="evidence" value="ECO:0007669"/>
    <property type="project" value="UniProtKB-SubCell"/>
</dbReference>
<dbReference type="GO" id="GO:0005509">
    <property type="term" value="F:calcium ion binding"/>
    <property type="evidence" value="ECO:0007669"/>
    <property type="project" value="InterPro"/>
</dbReference>
<dbReference type="GO" id="GO:0047498">
    <property type="term" value="F:calcium-dependent phospholipase A2 activity"/>
    <property type="evidence" value="ECO:0007669"/>
    <property type="project" value="TreeGrafter"/>
</dbReference>
<dbReference type="GO" id="GO:0005543">
    <property type="term" value="F:phospholipid binding"/>
    <property type="evidence" value="ECO:0007669"/>
    <property type="project" value="TreeGrafter"/>
</dbReference>
<dbReference type="GO" id="GO:0090729">
    <property type="term" value="F:toxin activity"/>
    <property type="evidence" value="ECO:0007669"/>
    <property type="project" value="UniProtKB-KW"/>
</dbReference>
<dbReference type="GO" id="GO:0050482">
    <property type="term" value="P:arachidonate secretion"/>
    <property type="evidence" value="ECO:0007669"/>
    <property type="project" value="InterPro"/>
</dbReference>
<dbReference type="GO" id="GO:0016042">
    <property type="term" value="P:lipid catabolic process"/>
    <property type="evidence" value="ECO:0007669"/>
    <property type="project" value="UniProtKB-KW"/>
</dbReference>
<dbReference type="GO" id="GO:0042130">
    <property type="term" value="P:negative regulation of T cell proliferation"/>
    <property type="evidence" value="ECO:0007669"/>
    <property type="project" value="TreeGrafter"/>
</dbReference>
<dbReference type="GO" id="GO:0006644">
    <property type="term" value="P:phospholipid metabolic process"/>
    <property type="evidence" value="ECO:0007669"/>
    <property type="project" value="InterPro"/>
</dbReference>
<dbReference type="CDD" id="cd00125">
    <property type="entry name" value="PLA2c"/>
    <property type="match status" value="1"/>
</dbReference>
<dbReference type="FunFam" id="1.20.90.10:FF:000001">
    <property type="entry name" value="Basic phospholipase A2 homolog"/>
    <property type="match status" value="1"/>
</dbReference>
<dbReference type="Gene3D" id="1.20.90.10">
    <property type="entry name" value="Phospholipase A2 domain"/>
    <property type="match status" value="1"/>
</dbReference>
<dbReference type="InterPro" id="IPR001211">
    <property type="entry name" value="PLipase_A2"/>
</dbReference>
<dbReference type="InterPro" id="IPR033112">
    <property type="entry name" value="PLipase_A2_Asp_AS"/>
</dbReference>
<dbReference type="InterPro" id="IPR016090">
    <property type="entry name" value="PLipase_A2_dom"/>
</dbReference>
<dbReference type="InterPro" id="IPR036444">
    <property type="entry name" value="PLipase_A2_dom_sf"/>
</dbReference>
<dbReference type="InterPro" id="IPR033113">
    <property type="entry name" value="PLipase_A2_His_AS"/>
</dbReference>
<dbReference type="PANTHER" id="PTHR11716">
    <property type="entry name" value="PHOSPHOLIPASE A2 FAMILY MEMBER"/>
    <property type="match status" value="1"/>
</dbReference>
<dbReference type="PANTHER" id="PTHR11716:SF9">
    <property type="entry name" value="PHOSPHOLIPASE A2, MEMBRANE ASSOCIATED"/>
    <property type="match status" value="1"/>
</dbReference>
<dbReference type="Pfam" id="PF00068">
    <property type="entry name" value="Phospholip_A2_1"/>
    <property type="match status" value="1"/>
</dbReference>
<dbReference type="PRINTS" id="PR00389">
    <property type="entry name" value="PHPHLIPASEA2"/>
</dbReference>
<dbReference type="SMART" id="SM00085">
    <property type="entry name" value="PA2c"/>
    <property type="match status" value="1"/>
</dbReference>
<dbReference type="SUPFAM" id="SSF48619">
    <property type="entry name" value="Phospholipase A2, PLA2"/>
    <property type="match status" value="1"/>
</dbReference>
<dbReference type="PROSITE" id="PS00119">
    <property type="entry name" value="PA2_ASP"/>
    <property type="match status" value="1"/>
</dbReference>
<dbReference type="PROSITE" id="PS00118">
    <property type="entry name" value="PA2_HIS"/>
    <property type="match status" value="1"/>
</dbReference>
<protein>
    <recommendedName>
        <fullName>Acidic phospholipase A2 2</fullName>
        <shortName>svPLA2</shortName>
        <ecNumber>3.1.1.4</ecNumber>
    </recommendedName>
    <alternativeName>
        <fullName>Phosphatidylcholine 2-acylhydrolase</fullName>
    </alternativeName>
</protein>
<name>PA2A2_PROMU</name>
<reference key="1">
    <citation type="submission" date="2000-04" db="EMBL/GenBank/DDBJ databases">
        <authorList>
            <person name="Tsai I.-H."/>
        </authorList>
    </citation>
    <scope>NUCLEOTIDE SEQUENCE [MRNA]</scope>
    <source>
        <tissue>Venom gland</tissue>
    </source>
</reference>
<evidence type="ECO:0000250" key="1"/>
<evidence type="ECO:0000250" key="2">
    <source>
        <dbReference type="UniProtKB" id="O42187"/>
    </source>
</evidence>
<evidence type="ECO:0000255" key="3">
    <source>
        <dbReference type="PROSITE-ProRule" id="PRU10035"/>
    </source>
</evidence>
<evidence type="ECO:0000255" key="4">
    <source>
        <dbReference type="PROSITE-ProRule" id="PRU10036"/>
    </source>
</evidence>
<evidence type="ECO:0000305" key="5"/>
<sequence length="138" mass="15739">MRTLWIVAVLLLGVEGNLWQFREMIKEATGKEPLTTYLFYACYCGWGGRGEPKDATDRCCFVHDCCYGKLTACSPKLDMYTYSQKNEDIVCGGDDPCKKEICECDKAAAICFLNNLGTYNEEYNNYRKSRCIEESPKC</sequence>
<accession>Q9I968</accession>
<feature type="signal peptide" evidence="1">
    <location>
        <begin position="1"/>
        <end position="16"/>
    </location>
</feature>
<feature type="chain" id="PRO_0000022964" description="Acidic phospholipase A2 2">
    <location>
        <begin position="17"/>
        <end position="138"/>
    </location>
</feature>
<feature type="active site" evidence="2">
    <location>
        <position position="63"/>
    </location>
</feature>
<feature type="active site" evidence="2">
    <location>
        <position position="105"/>
    </location>
</feature>
<feature type="binding site" evidence="2">
    <location>
        <position position="43"/>
    </location>
    <ligand>
        <name>Ca(2+)</name>
        <dbReference type="ChEBI" id="CHEBI:29108"/>
    </ligand>
</feature>
<feature type="binding site" evidence="2">
    <location>
        <position position="45"/>
    </location>
    <ligand>
        <name>Ca(2+)</name>
        <dbReference type="ChEBI" id="CHEBI:29108"/>
    </ligand>
</feature>
<feature type="binding site" evidence="2">
    <location>
        <position position="47"/>
    </location>
    <ligand>
        <name>Ca(2+)</name>
        <dbReference type="ChEBI" id="CHEBI:29108"/>
    </ligand>
</feature>
<feature type="binding site" evidence="2">
    <location>
        <position position="64"/>
    </location>
    <ligand>
        <name>Ca(2+)</name>
        <dbReference type="ChEBI" id="CHEBI:29108"/>
    </ligand>
</feature>
<feature type="disulfide bond" evidence="2">
    <location>
        <begin position="42"/>
        <end position="131"/>
    </location>
</feature>
<feature type="disulfide bond" evidence="2">
    <location>
        <begin position="44"/>
        <end position="60"/>
    </location>
</feature>
<feature type="disulfide bond" evidence="2">
    <location>
        <begin position="59"/>
        <end position="111"/>
    </location>
</feature>
<feature type="disulfide bond" evidence="2">
    <location>
        <begin position="65"/>
        <end position="138"/>
    </location>
</feature>
<feature type="disulfide bond" evidence="2">
    <location>
        <begin position="66"/>
        <end position="104"/>
    </location>
</feature>
<feature type="disulfide bond" evidence="2">
    <location>
        <begin position="73"/>
        <end position="97"/>
    </location>
</feature>
<feature type="disulfide bond" evidence="2">
    <location>
        <begin position="91"/>
        <end position="102"/>
    </location>
</feature>
<comment type="function">
    <text evidence="1">Snake venom phospholipase A2 (PLA2) that displays edema-inducing activities, exhibits indirect hemolytic activity, and inhibits ADP-induced platelet aggregation. PLA2 catalyzes the calcium-dependent hydrolysis of the 2-acyl groups in 3-sn-phosphoglycerides (By similarity).</text>
</comment>
<comment type="catalytic activity">
    <reaction evidence="3 4">
        <text>a 1,2-diacyl-sn-glycero-3-phosphocholine + H2O = a 1-acyl-sn-glycero-3-phosphocholine + a fatty acid + H(+)</text>
        <dbReference type="Rhea" id="RHEA:15801"/>
        <dbReference type="ChEBI" id="CHEBI:15377"/>
        <dbReference type="ChEBI" id="CHEBI:15378"/>
        <dbReference type="ChEBI" id="CHEBI:28868"/>
        <dbReference type="ChEBI" id="CHEBI:57643"/>
        <dbReference type="ChEBI" id="CHEBI:58168"/>
        <dbReference type="EC" id="3.1.1.4"/>
    </reaction>
</comment>
<comment type="cofactor">
    <cofactor evidence="1">
        <name>Ca(2+)</name>
        <dbReference type="ChEBI" id="CHEBI:29108"/>
    </cofactor>
    <text evidence="1">Binds 1 Ca(2+) ion.</text>
</comment>
<comment type="subcellular location">
    <subcellularLocation>
        <location evidence="1">Secreted</location>
    </subcellularLocation>
</comment>
<comment type="tissue specificity">
    <text>Expressed by the venom gland.</text>
</comment>
<comment type="similarity">
    <text evidence="5">Belongs to the phospholipase A2 family. Group II subfamily. D49 sub-subfamily.</text>
</comment>
<organism>
    <name type="scientific">Protobothrops mucrosquamatus</name>
    <name type="common">Taiwan habu</name>
    <name type="synonym">Trimeresurus mucrosquamatus</name>
    <dbReference type="NCBI Taxonomy" id="103944"/>
    <lineage>
        <taxon>Eukaryota</taxon>
        <taxon>Metazoa</taxon>
        <taxon>Chordata</taxon>
        <taxon>Craniata</taxon>
        <taxon>Vertebrata</taxon>
        <taxon>Euteleostomi</taxon>
        <taxon>Lepidosauria</taxon>
        <taxon>Squamata</taxon>
        <taxon>Bifurcata</taxon>
        <taxon>Unidentata</taxon>
        <taxon>Episquamata</taxon>
        <taxon>Toxicofera</taxon>
        <taxon>Serpentes</taxon>
        <taxon>Colubroidea</taxon>
        <taxon>Viperidae</taxon>
        <taxon>Crotalinae</taxon>
        <taxon>Protobothrops</taxon>
    </lineage>
</organism>